<name>YFNE_BACSU</name>
<organism>
    <name type="scientific">Bacillus subtilis (strain 168)</name>
    <dbReference type="NCBI Taxonomy" id="224308"/>
    <lineage>
        <taxon>Bacteria</taxon>
        <taxon>Bacillati</taxon>
        <taxon>Bacillota</taxon>
        <taxon>Bacilli</taxon>
        <taxon>Bacillales</taxon>
        <taxon>Bacillaceae</taxon>
        <taxon>Bacillus</taxon>
    </lineage>
</organism>
<comment type="similarity">
    <text evidence="1">Belongs to the glycosyltransferase 2 family.</text>
</comment>
<feature type="chain" id="PRO_0000378083" description="Uncharacterized glycosyltransferase YfnE">
    <location>
        <begin position="1"/>
        <end position="392"/>
    </location>
</feature>
<gene>
    <name type="primary">yfnE</name>
    <name type="ordered locus">BSU07300</name>
</gene>
<keyword id="KW-0328">Glycosyltransferase</keyword>
<keyword id="KW-1185">Reference proteome</keyword>
<keyword id="KW-0808">Transferase</keyword>
<proteinExistence type="inferred from homology"/>
<evidence type="ECO:0000305" key="1"/>
<protein>
    <recommendedName>
        <fullName>Uncharacterized glycosyltransferase YfnE</fullName>
        <ecNumber>2.4.-.-</ecNumber>
    </recommendedName>
</protein>
<accession>O06483</accession>
<reference key="1">
    <citation type="journal article" date="1997" name="Nature">
        <title>The complete genome sequence of the Gram-positive bacterium Bacillus subtilis.</title>
        <authorList>
            <person name="Kunst F."/>
            <person name="Ogasawara N."/>
            <person name="Moszer I."/>
            <person name="Albertini A.M."/>
            <person name="Alloni G."/>
            <person name="Azevedo V."/>
            <person name="Bertero M.G."/>
            <person name="Bessieres P."/>
            <person name="Bolotin A."/>
            <person name="Borchert S."/>
            <person name="Borriss R."/>
            <person name="Boursier L."/>
            <person name="Brans A."/>
            <person name="Braun M."/>
            <person name="Brignell S.C."/>
            <person name="Bron S."/>
            <person name="Brouillet S."/>
            <person name="Bruschi C.V."/>
            <person name="Caldwell B."/>
            <person name="Capuano V."/>
            <person name="Carter N.M."/>
            <person name="Choi S.-K."/>
            <person name="Codani J.-J."/>
            <person name="Connerton I.F."/>
            <person name="Cummings N.J."/>
            <person name="Daniel R.A."/>
            <person name="Denizot F."/>
            <person name="Devine K.M."/>
            <person name="Duesterhoeft A."/>
            <person name="Ehrlich S.D."/>
            <person name="Emmerson P.T."/>
            <person name="Entian K.-D."/>
            <person name="Errington J."/>
            <person name="Fabret C."/>
            <person name="Ferrari E."/>
            <person name="Foulger D."/>
            <person name="Fritz C."/>
            <person name="Fujita M."/>
            <person name="Fujita Y."/>
            <person name="Fuma S."/>
            <person name="Galizzi A."/>
            <person name="Galleron N."/>
            <person name="Ghim S.-Y."/>
            <person name="Glaser P."/>
            <person name="Goffeau A."/>
            <person name="Golightly E.J."/>
            <person name="Grandi G."/>
            <person name="Guiseppi G."/>
            <person name="Guy B.J."/>
            <person name="Haga K."/>
            <person name="Haiech J."/>
            <person name="Harwood C.R."/>
            <person name="Henaut A."/>
            <person name="Hilbert H."/>
            <person name="Holsappel S."/>
            <person name="Hosono S."/>
            <person name="Hullo M.-F."/>
            <person name="Itaya M."/>
            <person name="Jones L.-M."/>
            <person name="Joris B."/>
            <person name="Karamata D."/>
            <person name="Kasahara Y."/>
            <person name="Klaerr-Blanchard M."/>
            <person name="Klein C."/>
            <person name="Kobayashi Y."/>
            <person name="Koetter P."/>
            <person name="Koningstein G."/>
            <person name="Krogh S."/>
            <person name="Kumano M."/>
            <person name="Kurita K."/>
            <person name="Lapidus A."/>
            <person name="Lardinois S."/>
            <person name="Lauber J."/>
            <person name="Lazarevic V."/>
            <person name="Lee S.-M."/>
            <person name="Levine A."/>
            <person name="Liu H."/>
            <person name="Masuda S."/>
            <person name="Mauel C."/>
            <person name="Medigue C."/>
            <person name="Medina N."/>
            <person name="Mellado R.P."/>
            <person name="Mizuno M."/>
            <person name="Moestl D."/>
            <person name="Nakai S."/>
            <person name="Noback M."/>
            <person name="Noone D."/>
            <person name="O'Reilly M."/>
            <person name="Ogawa K."/>
            <person name="Ogiwara A."/>
            <person name="Oudega B."/>
            <person name="Park S.-H."/>
            <person name="Parro V."/>
            <person name="Pohl T.M."/>
            <person name="Portetelle D."/>
            <person name="Porwollik S."/>
            <person name="Prescott A.M."/>
            <person name="Presecan E."/>
            <person name="Pujic P."/>
            <person name="Purnelle B."/>
            <person name="Rapoport G."/>
            <person name="Rey M."/>
            <person name="Reynolds S."/>
            <person name="Rieger M."/>
            <person name="Rivolta C."/>
            <person name="Rocha E."/>
            <person name="Roche B."/>
            <person name="Rose M."/>
            <person name="Sadaie Y."/>
            <person name="Sato T."/>
            <person name="Scanlan E."/>
            <person name="Schleich S."/>
            <person name="Schroeter R."/>
            <person name="Scoffone F."/>
            <person name="Sekiguchi J."/>
            <person name="Sekowska A."/>
            <person name="Seror S.J."/>
            <person name="Serror P."/>
            <person name="Shin B.-S."/>
            <person name="Soldo B."/>
            <person name="Sorokin A."/>
            <person name="Tacconi E."/>
            <person name="Takagi T."/>
            <person name="Takahashi H."/>
            <person name="Takemaru K."/>
            <person name="Takeuchi M."/>
            <person name="Tamakoshi A."/>
            <person name="Tanaka T."/>
            <person name="Terpstra P."/>
            <person name="Tognoni A."/>
            <person name="Tosato V."/>
            <person name="Uchiyama S."/>
            <person name="Vandenbol M."/>
            <person name="Vannier F."/>
            <person name="Vassarotti A."/>
            <person name="Viari A."/>
            <person name="Wambutt R."/>
            <person name="Wedler E."/>
            <person name="Wedler H."/>
            <person name="Weitzenegger T."/>
            <person name="Winters P."/>
            <person name="Wipat A."/>
            <person name="Yamamoto H."/>
            <person name="Yamane K."/>
            <person name="Yasumoto K."/>
            <person name="Yata K."/>
            <person name="Yoshida K."/>
            <person name="Yoshikawa H.-F."/>
            <person name="Zumstein E."/>
            <person name="Yoshikawa H."/>
            <person name="Danchin A."/>
        </authorList>
    </citation>
    <scope>NUCLEOTIDE SEQUENCE [LARGE SCALE GENOMIC DNA]</scope>
    <source>
        <strain>168</strain>
    </source>
</reference>
<dbReference type="EC" id="2.4.-.-"/>
<dbReference type="EMBL" id="AL009126">
    <property type="protein sequence ID" value="CAB12549.1"/>
    <property type="molecule type" value="Genomic_DNA"/>
</dbReference>
<dbReference type="PIR" id="H69814">
    <property type="entry name" value="H69814"/>
</dbReference>
<dbReference type="RefSeq" id="NP_388611.1">
    <property type="nucleotide sequence ID" value="NC_000964.3"/>
</dbReference>
<dbReference type="RefSeq" id="WP_003233779.1">
    <property type="nucleotide sequence ID" value="NZ_OZ025638.1"/>
</dbReference>
<dbReference type="SMR" id="O06483"/>
<dbReference type="FunCoup" id="O06483">
    <property type="interactions" value="76"/>
</dbReference>
<dbReference type="STRING" id="224308.BSU07300"/>
<dbReference type="CAZy" id="GT2">
    <property type="family name" value="Glycosyltransferase Family 2"/>
</dbReference>
<dbReference type="PaxDb" id="224308-BSU07300"/>
<dbReference type="EnsemblBacteria" id="CAB12549">
    <property type="protein sequence ID" value="CAB12549"/>
    <property type="gene ID" value="BSU_07300"/>
</dbReference>
<dbReference type="GeneID" id="938781"/>
<dbReference type="KEGG" id="bsu:BSU07300"/>
<dbReference type="PATRIC" id="fig|224308.179.peg.792"/>
<dbReference type="eggNOG" id="COG1216">
    <property type="taxonomic scope" value="Bacteria"/>
</dbReference>
<dbReference type="InParanoid" id="O06483"/>
<dbReference type="OrthoDB" id="9812302at2"/>
<dbReference type="PhylomeDB" id="O06483"/>
<dbReference type="BioCyc" id="BSUB:BSU07300-MONOMER"/>
<dbReference type="Proteomes" id="UP000001570">
    <property type="component" value="Chromosome"/>
</dbReference>
<dbReference type="GO" id="GO:0016757">
    <property type="term" value="F:glycosyltransferase activity"/>
    <property type="evidence" value="ECO:0007669"/>
    <property type="project" value="UniProtKB-KW"/>
</dbReference>
<dbReference type="CDD" id="cd00761">
    <property type="entry name" value="Glyco_tranf_GTA_type"/>
    <property type="match status" value="1"/>
</dbReference>
<dbReference type="Gene3D" id="3.90.550.10">
    <property type="entry name" value="Spore Coat Polysaccharide Biosynthesis Protein SpsA, Chain A"/>
    <property type="match status" value="1"/>
</dbReference>
<dbReference type="InterPro" id="IPR001173">
    <property type="entry name" value="Glyco_trans_2-like"/>
</dbReference>
<dbReference type="InterPro" id="IPR050834">
    <property type="entry name" value="Glycosyltransf_2"/>
</dbReference>
<dbReference type="InterPro" id="IPR029044">
    <property type="entry name" value="Nucleotide-diphossugar_trans"/>
</dbReference>
<dbReference type="PANTHER" id="PTHR43685">
    <property type="entry name" value="GLYCOSYLTRANSFERASE"/>
    <property type="match status" value="1"/>
</dbReference>
<dbReference type="PANTHER" id="PTHR43685:SF3">
    <property type="entry name" value="SLR2126 PROTEIN"/>
    <property type="match status" value="1"/>
</dbReference>
<dbReference type="Pfam" id="PF00535">
    <property type="entry name" value="Glycos_transf_2"/>
    <property type="match status" value="1"/>
</dbReference>
<dbReference type="SUPFAM" id="SSF53448">
    <property type="entry name" value="Nucleotide-diphospho-sugar transferases"/>
    <property type="match status" value="1"/>
</dbReference>
<sequence length="392" mass="45487">MKASVIIPAYNSKERLYNSLLSLNQQECDEEFEVIVADNGSEDGTLSMLESFQADFPLIFTRIKENRGIAYGRNQALRNARGDILIFHDSDMLAAKDLVAKHIKAHENEENLVVCGLFWKRIYSFYYERFEEEHKEQLAKLTGEMPKKDKQKLLEEADIKNGSFLDKSFDLDTDFIDVLKKILDEYGDDLKGYHMPWRFFITNNSSVKRKHVVDLGLFDEGIVRYGFEDYDLGIRLHQAGLTFRLRRDIVSVHQEHPSNCKSVDDIRANIAYMCDKYNNIRSLDVHLAFNGPFPPDMTNRIMADIQKLLESQKYDMLLNLFLELLHVVKERNIDPDWRKKSPRVTAKSFDLQTVRKLLPKAKKKLGVNDFANALYALVNDLLHVDLRSLDVV</sequence>